<feature type="chain" id="PRO_1000136751" description="Ribosome maturation factor RimP">
    <location>
        <begin position="1"/>
        <end position="196"/>
    </location>
</feature>
<feature type="region of interest" description="Disordered" evidence="2">
    <location>
        <begin position="131"/>
        <end position="153"/>
    </location>
</feature>
<feature type="compositionally biased region" description="Basic residues" evidence="2">
    <location>
        <begin position="131"/>
        <end position="145"/>
    </location>
</feature>
<comment type="function">
    <text evidence="1">Required for maturation of 30S ribosomal subunits.</text>
</comment>
<comment type="subcellular location">
    <subcellularLocation>
        <location evidence="1">Cytoplasm</location>
    </subcellularLocation>
</comment>
<comment type="similarity">
    <text evidence="1">Belongs to the RimP family.</text>
</comment>
<sequence>MATPLDEKLRALAADEAMKCGLDVEKLTFTRAGAKSSVKIAVDADERPDLDLLEEASQLIGAAFDAAEEAQQIDLGPSYTLEVTTPGLDFPLREARNFQRNIGRLANLPGGGKGRIAAVENDEVAILPAAKKKAGKKSQGKKAGKKTPQAPVQIYPRAELAGSTIEVEFSPAPAAEQELLGLTMAEYHELAKSDEA</sequence>
<keyword id="KW-0963">Cytoplasm</keyword>
<keyword id="KW-1185">Reference proteome</keyword>
<keyword id="KW-0690">Ribosome biogenesis</keyword>
<reference key="1">
    <citation type="journal article" date="2008" name="J. Biotechnol.">
        <title>The lifestyle of Corynebacterium urealyticum derived from its complete genome sequence established by pyrosequencing.</title>
        <authorList>
            <person name="Tauch A."/>
            <person name="Trost E."/>
            <person name="Tilker A."/>
            <person name="Ludewig U."/>
            <person name="Schneiker S."/>
            <person name="Goesmann A."/>
            <person name="Arnold W."/>
            <person name="Bekel T."/>
            <person name="Brinkrolf K."/>
            <person name="Brune I."/>
            <person name="Goetker S."/>
            <person name="Kalinowski J."/>
            <person name="Kamp P.-B."/>
            <person name="Lobo F.P."/>
            <person name="Viehoever P."/>
            <person name="Weisshaar B."/>
            <person name="Soriano F."/>
            <person name="Droege M."/>
            <person name="Puehler A."/>
        </authorList>
    </citation>
    <scope>NUCLEOTIDE SEQUENCE [LARGE SCALE GENOMIC DNA]</scope>
    <source>
        <strain>ATCC 43042 / DSM 7109</strain>
    </source>
</reference>
<accession>B1VGB7</accession>
<protein>
    <recommendedName>
        <fullName evidence="1">Ribosome maturation factor RimP</fullName>
    </recommendedName>
</protein>
<name>RIMP_CORU7</name>
<evidence type="ECO:0000255" key="1">
    <source>
        <dbReference type="HAMAP-Rule" id="MF_01077"/>
    </source>
</evidence>
<evidence type="ECO:0000256" key="2">
    <source>
        <dbReference type="SAM" id="MobiDB-lite"/>
    </source>
</evidence>
<proteinExistence type="inferred from homology"/>
<dbReference type="EMBL" id="AM942444">
    <property type="protein sequence ID" value="CAQ04806.1"/>
    <property type="molecule type" value="Genomic_DNA"/>
</dbReference>
<dbReference type="RefSeq" id="WP_012360095.1">
    <property type="nucleotide sequence ID" value="NC_010545.1"/>
</dbReference>
<dbReference type="SMR" id="B1VGB7"/>
<dbReference type="STRING" id="504474.cu0847"/>
<dbReference type="GeneID" id="60603624"/>
<dbReference type="KEGG" id="cur:cu0847"/>
<dbReference type="eggNOG" id="COG0779">
    <property type="taxonomic scope" value="Bacteria"/>
</dbReference>
<dbReference type="HOGENOM" id="CLU_070525_3_0_11"/>
<dbReference type="Proteomes" id="UP000001727">
    <property type="component" value="Chromosome"/>
</dbReference>
<dbReference type="GO" id="GO:0005829">
    <property type="term" value="C:cytosol"/>
    <property type="evidence" value="ECO:0007669"/>
    <property type="project" value="TreeGrafter"/>
</dbReference>
<dbReference type="GO" id="GO:0000028">
    <property type="term" value="P:ribosomal small subunit assembly"/>
    <property type="evidence" value="ECO:0007669"/>
    <property type="project" value="TreeGrafter"/>
</dbReference>
<dbReference type="GO" id="GO:0006412">
    <property type="term" value="P:translation"/>
    <property type="evidence" value="ECO:0007669"/>
    <property type="project" value="TreeGrafter"/>
</dbReference>
<dbReference type="Gene3D" id="3.30.300.70">
    <property type="entry name" value="RimP-like superfamily, N-terminal"/>
    <property type="match status" value="1"/>
</dbReference>
<dbReference type="HAMAP" id="MF_01077">
    <property type="entry name" value="RimP"/>
    <property type="match status" value="1"/>
</dbReference>
<dbReference type="InterPro" id="IPR003728">
    <property type="entry name" value="Ribosome_maturation_RimP"/>
</dbReference>
<dbReference type="InterPro" id="IPR028989">
    <property type="entry name" value="RimP_N"/>
</dbReference>
<dbReference type="InterPro" id="IPR035956">
    <property type="entry name" value="RimP_N_sf"/>
</dbReference>
<dbReference type="NCBIfam" id="NF000930">
    <property type="entry name" value="PRK00092.2-2"/>
    <property type="match status" value="1"/>
</dbReference>
<dbReference type="PANTHER" id="PTHR33867">
    <property type="entry name" value="RIBOSOME MATURATION FACTOR RIMP"/>
    <property type="match status" value="1"/>
</dbReference>
<dbReference type="PANTHER" id="PTHR33867:SF1">
    <property type="entry name" value="RIBOSOME MATURATION FACTOR RIMP"/>
    <property type="match status" value="1"/>
</dbReference>
<dbReference type="Pfam" id="PF02576">
    <property type="entry name" value="RimP_N"/>
    <property type="match status" value="1"/>
</dbReference>
<dbReference type="SUPFAM" id="SSF75420">
    <property type="entry name" value="YhbC-like, N-terminal domain"/>
    <property type="match status" value="1"/>
</dbReference>
<organism>
    <name type="scientific">Corynebacterium urealyticum (strain ATCC 43042 / DSM 7109)</name>
    <dbReference type="NCBI Taxonomy" id="504474"/>
    <lineage>
        <taxon>Bacteria</taxon>
        <taxon>Bacillati</taxon>
        <taxon>Actinomycetota</taxon>
        <taxon>Actinomycetes</taxon>
        <taxon>Mycobacteriales</taxon>
        <taxon>Corynebacteriaceae</taxon>
        <taxon>Corynebacterium</taxon>
    </lineage>
</organism>
<gene>
    <name evidence="1" type="primary">rimP</name>
    <name type="ordered locus">cu0847</name>
</gene>